<reference key="1">
    <citation type="journal article" date="2004" name="Genome Res.">
        <title>The status, quality, and expansion of the NIH full-length cDNA project: the Mammalian Gene Collection (MGC).</title>
        <authorList>
            <consortium name="The MGC Project Team"/>
        </authorList>
    </citation>
    <scope>NUCLEOTIDE SEQUENCE [LARGE SCALE MRNA] (ISOFORM 2)</scope>
    <source>
        <tissue>Kidney</tissue>
    </source>
</reference>
<reference key="2">
    <citation type="journal article" date="2001" name="J. Biol. Chem.">
        <title>Molecular and biochemical characterization of rat epsilon-N-trimethyllysine hydroxylase, the first enzyme of carnitine biosynthesis.</title>
        <authorList>
            <person name="Vaz F.M."/>
            <person name="Ofman R."/>
            <person name="Westinga K."/>
            <person name="Back J.W."/>
            <person name="Wanders R.J.A."/>
        </authorList>
    </citation>
    <scope>NUCLEOTIDE SEQUENCE [MRNA] OF 17-421 (ISOFORM 1)</scope>
    <scope>PARTIAL PROTEIN SEQUENCE</scope>
    <scope>FUNCTION</scope>
    <scope>CATALYTIC ACTIVITY</scope>
    <scope>SUBUNIT</scope>
    <scope>SUBCELLULAR LOCATION</scope>
    <source>
        <strain>Wistar</strain>
    </source>
</reference>
<protein>
    <recommendedName>
        <fullName>Trimethyllysine dioxygenase, mitochondrial</fullName>
        <ecNumber evidence="4">1.14.11.8</ecNumber>
    </recommendedName>
    <alternativeName>
        <fullName>Epsilon-trimethyllysine 2-oxoglutarate dioxygenase</fullName>
    </alternativeName>
    <alternativeName>
        <fullName>TML hydroxylase</fullName>
    </alternativeName>
    <alternativeName>
        <fullName>TML-alpha-ketoglutarate dioxygenase</fullName>
        <shortName>TML dioxygenase</shortName>
        <shortName>TMLD</shortName>
    </alternativeName>
</protein>
<feature type="transit peptide" description="Mitochondrion" evidence="1">
    <location>
        <begin position="1"/>
        <end position="15"/>
    </location>
</feature>
<feature type="chain" id="PRO_0000002797" description="Trimethyllysine dioxygenase, mitochondrial">
    <location>
        <begin position="16"/>
        <end position="421"/>
    </location>
</feature>
<feature type="binding site" evidence="1">
    <location>
        <position position="242"/>
    </location>
    <ligand>
        <name>Fe cation</name>
        <dbReference type="ChEBI" id="CHEBI:24875"/>
        <note>catalytic</note>
    </ligand>
</feature>
<feature type="binding site" evidence="1">
    <location>
        <position position="244"/>
    </location>
    <ligand>
        <name>Fe cation</name>
        <dbReference type="ChEBI" id="CHEBI:24875"/>
        <note>catalytic</note>
    </ligand>
</feature>
<feature type="binding site" evidence="1">
    <location>
        <position position="389"/>
    </location>
    <ligand>
        <name>Fe cation</name>
        <dbReference type="ChEBI" id="CHEBI:24875"/>
        <note>catalytic</note>
    </ligand>
</feature>
<feature type="modified residue" description="N6-acetyllysine" evidence="2">
    <location>
        <position position="179"/>
    </location>
</feature>
<feature type="modified residue" description="N6-acetyllysine" evidence="3">
    <location>
        <position position="236"/>
    </location>
</feature>
<feature type="splice variant" id="VSP_021580" description="In isoform 2." evidence="5">
    <original>L</original>
    <variation>LGTKPRALRLLEL</variation>
    <location>
        <position position="62"/>
    </location>
</feature>
<name>TMLH_RAT</name>
<evidence type="ECO:0000250" key="1"/>
<evidence type="ECO:0000250" key="2">
    <source>
        <dbReference type="UniProtKB" id="Q91ZE0"/>
    </source>
</evidence>
<evidence type="ECO:0000250" key="3">
    <source>
        <dbReference type="UniProtKB" id="Q9NVH6"/>
    </source>
</evidence>
<evidence type="ECO:0000269" key="4">
    <source>
    </source>
</evidence>
<evidence type="ECO:0000303" key="5">
    <source>
    </source>
</evidence>
<evidence type="ECO:0000305" key="6"/>
<organism>
    <name type="scientific">Rattus norvegicus</name>
    <name type="common">Rat</name>
    <dbReference type="NCBI Taxonomy" id="10116"/>
    <lineage>
        <taxon>Eukaryota</taxon>
        <taxon>Metazoa</taxon>
        <taxon>Chordata</taxon>
        <taxon>Craniata</taxon>
        <taxon>Vertebrata</taxon>
        <taxon>Euteleostomi</taxon>
        <taxon>Mammalia</taxon>
        <taxon>Eutheria</taxon>
        <taxon>Euarchontoglires</taxon>
        <taxon>Glires</taxon>
        <taxon>Rodentia</taxon>
        <taxon>Myomorpha</taxon>
        <taxon>Muroidea</taxon>
        <taxon>Muridae</taxon>
        <taxon>Murinae</taxon>
        <taxon>Rattus</taxon>
    </lineage>
</organism>
<accession>Q91ZW6</accession>
<accession>Q5U2P7</accession>
<sequence>MWYHKLLHQQSRLQNLMKRGDIAHGLRLSGFKSLFPFSLHWCHTASKSVNCTWHQHEDHLELQYASTVMRFDYVWLRDHCRSASCYNSKTHQRSLDTASVDLCIKPKTIRLDESTLFFTWPDGHVTRYDLDWLVKNSYEGQKQEVIQPRVLWNAKLYQDAQLPSVDFQGFLETKEGLKKFLQNFLLYGIAFVENVPPTQEHTEKLARRVSLIRETIYGRMWYFTSDFSRGDTAYTKLALDRHTDTTYFQEPCGIQVFHCLKHEGTGGRTLLVDGFYAAQQVLQRAPEEFDLLSQVPLKHEYIENVGQCHNHMIGVGPILNIYPWNKELYLIRYNNYDRAVINTVPYDVVRRWYAAHRTLTTELRRPENELWVKLKPGKVLFIDNWRVLHGRESFTGYRQLCGCYLTRDDVLNTARILGLHA</sequence>
<proteinExistence type="evidence at protein level"/>
<gene>
    <name type="primary">Tmlhe</name>
    <name type="synonym">Tmlh</name>
</gene>
<comment type="function">
    <text evidence="4">Converts trimethyllysine (TML) into hydroxytrimethyllysine (HTML) (PubMed:11431483).</text>
</comment>
<comment type="catalytic activity">
    <reaction evidence="4">
        <text>N(6),N(6),N(6)-trimethyl-L-lysine + 2-oxoglutarate + O2 = (3S)-3-hydroxy-N(6),N(6),N(6)-trimethyl-L-lysine + succinate + CO2</text>
        <dbReference type="Rhea" id="RHEA:14181"/>
        <dbReference type="ChEBI" id="CHEBI:15379"/>
        <dbReference type="ChEBI" id="CHEBI:16526"/>
        <dbReference type="ChEBI" id="CHEBI:16810"/>
        <dbReference type="ChEBI" id="CHEBI:30031"/>
        <dbReference type="ChEBI" id="CHEBI:58100"/>
        <dbReference type="ChEBI" id="CHEBI:141499"/>
        <dbReference type="EC" id="1.14.11.8"/>
    </reaction>
</comment>
<comment type="cofactor">
    <cofactor evidence="1">
        <name>Fe(2+)</name>
        <dbReference type="ChEBI" id="CHEBI:29033"/>
    </cofactor>
    <text evidence="1">Binds 1 Fe(2+) ion per subunit.</text>
</comment>
<comment type="cofactor">
    <cofactor>
        <name>L-ascorbate</name>
        <dbReference type="ChEBI" id="CHEBI:38290"/>
    </cofactor>
</comment>
<comment type="pathway">
    <text>Amine and polyamine biosynthesis; carnitine biosynthesis.</text>
</comment>
<comment type="subunit">
    <text evidence="4">Homodimer.</text>
</comment>
<comment type="subcellular location">
    <subcellularLocation>
        <location evidence="4">Mitochondrion matrix</location>
    </subcellularLocation>
</comment>
<comment type="alternative products">
    <event type="alternative splicing"/>
    <isoform>
        <id>Q91ZW6-1</id>
        <name>1</name>
        <sequence type="displayed"/>
    </isoform>
    <isoform>
        <id>Q91ZW6-2</id>
        <name>2</name>
        <sequence type="described" ref="VSP_021580"/>
    </isoform>
</comment>
<comment type="similarity">
    <text evidence="6">Belongs to the gamma-BBH/TMLD family.</text>
</comment>
<dbReference type="EC" id="1.14.11.8" evidence="4"/>
<dbReference type="EMBL" id="BC085923">
    <property type="protein sequence ID" value="AAH85923.1"/>
    <property type="molecule type" value="mRNA"/>
</dbReference>
<dbReference type="EMBL" id="AF374406">
    <property type="protein sequence ID" value="AAL01252.1"/>
    <property type="molecule type" value="mRNA"/>
</dbReference>
<dbReference type="RefSeq" id="NP_001421495.1">
    <molecule id="Q91ZW6-1"/>
    <property type="nucleotide sequence ID" value="NM_001434566.1"/>
</dbReference>
<dbReference type="RefSeq" id="NP_596878.2">
    <molecule id="Q91ZW6-2"/>
    <property type="nucleotide sequence ID" value="NM_133387.3"/>
</dbReference>
<dbReference type="RefSeq" id="XP_006255917.1">
    <property type="nucleotide sequence ID" value="XM_006255855.1"/>
</dbReference>
<dbReference type="SMR" id="Q91ZW6"/>
<dbReference type="FunCoup" id="Q91ZW6">
    <property type="interactions" value="158"/>
</dbReference>
<dbReference type="IntAct" id="Q91ZW6">
    <property type="interactions" value="1"/>
</dbReference>
<dbReference type="STRING" id="10116.ENSRNOP00000068322"/>
<dbReference type="iPTMnet" id="Q91ZW6"/>
<dbReference type="PhosphoSitePlus" id="Q91ZW6"/>
<dbReference type="PaxDb" id="10116-ENSRNOP00000068031"/>
<dbReference type="Ensembl" id="ENSRNOT00000076655.3">
    <molecule id="Q91ZW6-1"/>
    <property type="protein sequence ID" value="ENSRNOP00000068322.1"/>
    <property type="gene ID" value="ENSRNOG00000000729.8"/>
</dbReference>
<dbReference type="Ensembl" id="ENSRNOT00000076901.3">
    <molecule id="Q91ZW6-2"/>
    <property type="protein sequence ID" value="ENSRNOP00000068031.1"/>
    <property type="gene ID" value="ENSRNOG00000000729.8"/>
</dbReference>
<dbReference type="GeneID" id="170898"/>
<dbReference type="KEGG" id="rno:170898"/>
<dbReference type="UCSC" id="RGD:620629">
    <molecule id="Q91ZW6-1"/>
    <property type="organism name" value="rat"/>
</dbReference>
<dbReference type="AGR" id="RGD:620629"/>
<dbReference type="CTD" id="55217"/>
<dbReference type="RGD" id="620629">
    <property type="gene designation" value="Tmlhe"/>
</dbReference>
<dbReference type="eggNOG" id="KOG3889">
    <property type="taxonomic scope" value="Eukaryota"/>
</dbReference>
<dbReference type="GeneTree" id="ENSGT00530000063582"/>
<dbReference type="HOGENOM" id="CLU_021859_2_0_1"/>
<dbReference type="InParanoid" id="Q91ZW6"/>
<dbReference type="OMA" id="EKVCIQP"/>
<dbReference type="PhylomeDB" id="Q91ZW6"/>
<dbReference type="TreeFam" id="TF313805"/>
<dbReference type="BioCyc" id="MetaCyc:MONOMER-14429"/>
<dbReference type="BRENDA" id="1.14.11.8">
    <property type="organism ID" value="5301"/>
</dbReference>
<dbReference type="Reactome" id="R-RNO-71262">
    <property type="pathway name" value="Carnitine synthesis"/>
</dbReference>
<dbReference type="UniPathway" id="UPA00118"/>
<dbReference type="PRO" id="PR:Q91ZW6"/>
<dbReference type="Proteomes" id="UP000002494">
    <property type="component" value="Chromosome 20"/>
</dbReference>
<dbReference type="Bgee" id="ENSRNOG00000000729">
    <property type="expression patterns" value="Expressed in kidney and 19 other cell types or tissues"/>
</dbReference>
<dbReference type="GO" id="GO:0005759">
    <property type="term" value="C:mitochondrial matrix"/>
    <property type="evidence" value="ECO:0007669"/>
    <property type="project" value="UniProtKB-SubCell"/>
</dbReference>
<dbReference type="GO" id="GO:0005739">
    <property type="term" value="C:mitochondrion"/>
    <property type="evidence" value="ECO:0000266"/>
    <property type="project" value="RGD"/>
</dbReference>
<dbReference type="GO" id="GO:0005506">
    <property type="term" value="F:iron ion binding"/>
    <property type="evidence" value="ECO:0007669"/>
    <property type="project" value="InterPro"/>
</dbReference>
<dbReference type="GO" id="GO:0016702">
    <property type="term" value="F:oxidoreductase activity, acting on single donors with incorporation of molecular oxygen, incorporation of two atoms of oxygen"/>
    <property type="evidence" value="ECO:0000266"/>
    <property type="project" value="RGD"/>
</dbReference>
<dbReference type="GO" id="GO:0050353">
    <property type="term" value="F:trimethyllysine dioxygenase activity"/>
    <property type="evidence" value="ECO:0000314"/>
    <property type="project" value="RGD"/>
</dbReference>
<dbReference type="GO" id="GO:0045329">
    <property type="term" value="P:carnitine biosynthetic process"/>
    <property type="evidence" value="ECO:0000250"/>
    <property type="project" value="UniProtKB"/>
</dbReference>
<dbReference type="CDD" id="cd00250">
    <property type="entry name" value="CAS_like"/>
    <property type="match status" value="1"/>
</dbReference>
<dbReference type="FunFam" id="3.60.130.10:FF:000001">
    <property type="entry name" value="Trimethyllysine dioxygenase, mitochondrial"/>
    <property type="match status" value="1"/>
</dbReference>
<dbReference type="FunFam" id="3.30.2020.30:FF:000003">
    <property type="entry name" value="trimethyllysine dioxygenase, mitochondrial isoform X1"/>
    <property type="match status" value="1"/>
</dbReference>
<dbReference type="Gene3D" id="3.30.2020.30">
    <property type="match status" value="1"/>
</dbReference>
<dbReference type="Gene3D" id="3.60.130.10">
    <property type="entry name" value="Clavaminate synthase-like"/>
    <property type="match status" value="1"/>
</dbReference>
<dbReference type="InterPro" id="IPR050411">
    <property type="entry name" value="AlphaKG_dependent_hydroxylases"/>
</dbReference>
<dbReference type="InterPro" id="IPR010376">
    <property type="entry name" value="GBBH-like_N"/>
</dbReference>
<dbReference type="InterPro" id="IPR038492">
    <property type="entry name" value="GBBH-like_N_sf"/>
</dbReference>
<dbReference type="InterPro" id="IPR042098">
    <property type="entry name" value="TauD-like_sf"/>
</dbReference>
<dbReference type="InterPro" id="IPR003819">
    <property type="entry name" value="TauD/TfdA-like"/>
</dbReference>
<dbReference type="InterPro" id="IPR012776">
    <property type="entry name" value="Trimethyllysine_dOase"/>
</dbReference>
<dbReference type="NCBIfam" id="TIGR02410">
    <property type="entry name" value="carnitine_TMLD"/>
    <property type="match status" value="1"/>
</dbReference>
<dbReference type="PANTHER" id="PTHR10696">
    <property type="entry name" value="GAMMA-BUTYROBETAINE HYDROXYLASE-RELATED"/>
    <property type="match status" value="1"/>
</dbReference>
<dbReference type="PANTHER" id="PTHR10696:SF51">
    <property type="entry name" value="TRIMETHYLLYSINE DIOXYGENASE, MITOCHONDRIAL"/>
    <property type="match status" value="1"/>
</dbReference>
<dbReference type="Pfam" id="PF06155">
    <property type="entry name" value="GBBH-like_N"/>
    <property type="match status" value="1"/>
</dbReference>
<dbReference type="Pfam" id="PF02668">
    <property type="entry name" value="TauD"/>
    <property type="match status" value="1"/>
</dbReference>
<dbReference type="SUPFAM" id="SSF51197">
    <property type="entry name" value="Clavaminate synthase-like"/>
    <property type="match status" value="1"/>
</dbReference>
<keyword id="KW-0007">Acetylation</keyword>
<keyword id="KW-0025">Alternative splicing</keyword>
<keyword id="KW-0124">Carnitine biosynthesis</keyword>
<keyword id="KW-0223">Dioxygenase</keyword>
<keyword id="KW-0903">Direct protein sequencing</keyword>
<keyword id="KW-0408">Iron</keyword>
<keyword id="KW-0479">Metal-binding</keyword>
<keyword id="KW-0496">Mitochondrion</keyword>
<keyword id="KW-0560">Oxidoreductase</keyword>
<keyword id="KW-1185">Reference proteome</keyword>
<keyword id="KW-0809">Transit peptide</keyword>